<dbReference type="EC" id="2.3.1.117" evidence="1"/>
<dbReference type="EMBL" id="CP000016">
    <property type="protein sequence ID" value="AAZ40908.1"/>
    <property type="status" value="ALT_INIT"/>
    <property type="molecule type" value="Genomic_DNA"/>
</dbReference>
<dbReference type="RefSeq" id="WP_011282815.1">
    <property type="nucleotide sequence ID" value="NC_007292.1"/>
</dbReference>
<dbReference type="SMR" id="Q493D4"/>
<dbReference type="STRING" id="291272.BPEN_277"/>
<dbReference type="KEGG" id="bpn:BPEN_277"/>
<dbReference type="eggNOG" id="COG2171">
    <property type="taxonomic scope" value="Bacteria"/>
</dbReference>
<dbReference type="HOGENOM" id="CLU_050859_0_1_6"/>
<dbReference type="OrthoDB" id="9775362at2"/>
<dbReference type="UniPathway" id="UPA00034">
    <property type="reaction ID" value="UER00019"/>
</dbReference>
<dbReference type="Proteomes" id="UP000007794">
    <property type="component" value="Chromosome"/>
</dbReference>
<dbReference type="GO" id="GO:0005737">
    <property type="term" value="C:cytoplasm"/>
    <property type="evidence" value="ECO:0007669"/>
    <property type="project" value="UniProtKB-SubCell"/>
</dbReference>
<dbReference type="GO" id="GO:0008666">
    <property type="term" value="F:2,3,4,5-tetrahydropyridine-2,6-dicarboxylate N-succinyltransferase activity"/>
    <property type="evidence" value="ECO:0007669"/>
    <property type="project" value="UniProtKB-UniRule"/>
</dbReference>
<dbReference type="GO" id="GO:0016779">
    <property type="term" value="F:nucleotidyltransferase activity"/>
    <property type="evidence" value="ECO:0007669"/>
    <property type="project" value="TreeGrafter"/>
</dbReference>
<dbReference type="GO" id="GO:0019877">
    <property type="term" value="P:diaminopimelate biosynthetic process"/>
    <property type="evidence" value="ECO:0007669"/>
    <property type="project" value="UniProtKB-UniRule"/>
</dbReference>
<dbReference type="GO" id="GO:0009089">
    <property type="term" value="P:lysine biosynthetic process via diaminopimelate"/>
    <property type="evidence" value="ECO:0007669"/>
    <property type="project" value="UniProtKB-UniRule"/>
</dbReference>
<dbReference type="CDD" id="cd03350">
    <property type="entry name" value="LbH_THP_succinylT"/>
    <property type="match status" value="1"/>
</dbReference>
<dbReference type="Gene3D" id="2.160.10.10">
    <property type="entry name" value="Hexapeptide repeat proteins"/>
    <property type="match status" value="1"/>
</dbReference>
<dbReference type="Gene3D" id="1.10.166.10">
    <property type="entry name" value="Tetrahydrodipicolinate-N-succinyltransferase, N-terminal domain"/>
    <property type="match status" value="1"/>
</dbReference>
<dbReference type="HAMAP" id="MF_00811">
    <property type="entry name" value="DapD"/>
    <property type="match status" value="1"/>
</dbReference>
<dbReference type="InterPro" id="IPR005664">
    <property type="entry name" value="DapD_Trfase_Hexpep_rpt_fam"/>
</dbReference>
<dbReference type="InterPro" id="IPR001451">
    <property type="entry name" value="Hexapep"/>
</dbReference>
<dbReference type="InterPro" id="IPR018357">
    <property type="entry name" value="Hexapep_transf_CS"/>
</dbReference>
<dbReference type="InterPro" id="IPR023180">
    <property type="entry name" value="THP_succinylTrfase_dom1"/>
</dbReference>
<dbReference type="InterPro" id="IPR037133">
    <property type="entry name" value="THP_succinylTrfase_N_sf"/>
</dbReference>
<dbReference type="InterPro" id="IPR011004">
    <property type="entry name" value="Trimer_LpxA-like_sf"/>
</dbReference>
<dbReference type="NCBIfam" id="TIGR00965">
    <property type="entry name" value="dapD"/>
    <property type="match status" value="1"/>
</dbReference>
<dbReference type="NCBIfam" id="NF008808">
    <property type="entry name" value="PRK11830.1"/>
    <property type="match status" value="1"/>
</dbReference>
<dbReference type="PANTHER" id="PTHR19136:SF52">
    <property type="entry name" value="2,3,4,5-TETRAHYDROPYRIDINE-2,6-DICARBOXYLATE N-SUCCINYLTRANSFERASE"/>
    <property type="match status" value="1"/>
</dbReference>
<dbReference type="PANTHER" id="PTHR19136">
    <property type="entry name" value="MOLYBDENUM COFACTOR GUANYLYLTRANSFERASE"/>
    <property type="match status" value="1"/>
</dbReference>
<dbReference type="Pfam" id="PF14602">
    <property type="entry name" value="Hexapep_2"/>
    <property type="match status" value="1"/>
</dbReference>
<dbReference type="Pfam" id="PF14805">
    <property type="entry name" value="THDPS_N_2"/>
    <property type="match status" value="1"/>
</dbReference>
<dbReference type="SUPFAM" id="SSF51161">
    <property type="entry name" value="Trimeric LpxA-like enzymes"/>
    <property type="match status" value="1"/>
</dbReference>
<dbReference type="PROSITE" id="PS00101">
    <property type="entry name" value="HEXAPEP_TRANSFERASES"/>
    <property type="match status" value="1"/>
</dbReference>
<sequence length="273" mass="30229">MNQLRKIIESAFEKKEYISNNNIDSTVNNAVREIMDRLDNGTLRISEKINGTWITHQWLKKAIMLAFHTMDNQLITWGGGVFFDKFPMKFSGWDHTRFENKKLRIIPPATVRYGAYIADNTVIMPSYINLGAYIDVGTMIDTWATVGSCAQIGKYVHLSGGVGIGGVLEPIQTNPTIIEDNCFIGSRSEIVEGVIVEKGAVISMGVFIGQSTKIYDRASGNIYYGRVPAGSVVIPGSLPSKDGRVNTYCAVIVKTVDSKTKNKVKINNLLRDI</sequence>
<proteinExistence type="inferred from homology"/>
<reference key="1">
    <citation type="journal article" date="2005" name="Genome Res.">
        <title>Genome sequence of Blochmannia pennsylvanicus indicates parallel evolutionary trends among bacterial mutualists of insects.</title>
        <authorList>
            <person name="Degnan P.H."/>
            <person name="Lazarus A.B."/>
            <person name="Wernegreen J.J."/>
        </authorList>
    </citation>
    <scope>NUCLEOTIDE SEQUENCE [LARGE SCALE GENOMIC DNA]</scope>
    <source>
        <strain>BPEN</strain>
    </source>
</reference>
<keyword id="KW-0012">Acyltransferase</keyword>
<keyword id="KW-0028">Amino-acid biosynthesis</keyword>
<keyword id="KW-0963">Cytoplasm</keyword>
<keyword id="KW-0220">Diaminopimelate biosynthesis</keyword>
<keyword id="KW-0457">Lysine biosynthesis</keyword>
<keyword id="KW-1185">Reference proteome</keyword>
<keyword id="KW-0677">Repeat</keyword>
<keyword id="KW-0808">Transferase</keyword>
<evidence type="ECO:0000255" key="1">
    <source>
        <dbReference type="HAMAP-Rule" id="MF_00811"/>
    </source>
</evidence>
<evidence type="ECO:0000305" key="2"/>
<comment type="catalytic activity">
    <reaction evidence="1">
        <text>(S)-2,3,4,5-tetrahydrodipicolinate + succinyl-CoA + H2O = (S)-2-succinylamino-6-oxoheptanedioate + CoA</text>
        <dbReference type="Rhea" id="RHEA:17325"/>
        <dbReference type="ChEBI" id="CHEBI:15377"/>
        <dbReference type="ChEBI" id="CHEBI:15685"/>
        <dbReference type="ChEBI" id="CHEBI:16845"/>
        <dbReference type="ChEBI" id="CHEBI:57287"/>
        <dbReference type="ChEBI" id="CHEBI:57292"/>
        <dbReference type="EC" id="2.3.1.117"/>
    </reaction>
</comment>
<comment type="pathway">
    <text evidence="1">Amino-acid biosynthesis; L-lysine biosynthesis via DAP pathway; LL-2,6-diaminopimelate from (S)-tetrahydrodipicolinate (succinylase route): step 1/3.</text>
</comment>
<comment type="subunit">
    <text evidence="1">Homotrimer.</text>
</comment>
<comment type="subcellular location">
    <subcellularLocation>
        <location evidence="1">Cytoplasm</location>
    </subcellularLocation>
</comment>
<comment type="similarity">
    <text evidence="1">Belongs to the transferase hexapeptide repeat family.</text>
</comment>
<comment type="sequence caution" evidence="2">
    <conflict type="erroneous initiation">
        <sequence resource="EMBL-CDS" id="AAZ40908"/>
    </conflict>
</comment>
<feature type="chain" id="PRO_0000196915" description="2,3,4,5-tetrahydropyridine-2,6-dicarboxylate N-succinyltransferase">
    <location>
        <begin position="1"/>
        <end position="273"/>
    </location>
</feature>
<feature type="binding site" evidence="1">
    <location>
        <position position="104"/>
    </location>
    <ligand>
        <name>substrate</name>
    </ligand>
</feature>
<feature type="binding site" evidence="1">
    <location>
        <position position="141"/>
    </location>
    <ligand>
        <name>substrate</name>
    </ligand>
</feature>
<gene>
    <name evidence="1" type="primary">dapD</name>
    <name type="ordered locus">BPEN_277</name>
</gene>
<accession>Q493D4</accession>
<name>DAPD_BLOPB</name>
<organism>
    <name type="scientific">Blochmanniella pennsylvanica (strain BPEN)</name>
    <dbReference type="NCBI Taxonomy" id="291272"/>
    <lineage>
        <taxon>Bacteria</taxon>
        <taxon>Pseudomonadati</taxon>
        <taxon>Pseudomonadota</taxon>
        <taxon>Gammaproteobacteria</taxon>
        <taxon>Enterobacterales</taxon>
        <taxon>Enterobacteriaceae</taxon>
        <taxon>ant endosymbionts</taxon>
        <taxon>Candidatus Blochmanniella</taxon>
    </lineage>
</organism>
<protein>
    <recommendedName>
        <fullName evidence="1">2,3,4,5-tetrahydropyridine-2,6-dicarboxylate N-succinyltransferase</fullName>
        <ecNumber evidence="1">2.3.1.117</ecNumber>
    </recommendedName>
    <alternativeName>
        <fullName evidence="1">Tetrahydrodipicolinate N-succinyltransferase</fullName>
        <shortName evidence="1">THDP succinyltransferase</shortName>
        <shortName evidence="1">THP succinyltransferase</shortName>
        <shortName evidence="1">Tetrahydropicolinate succinylase</shortName>
    </alternativeName>
</protein>